<evidence type="ECO:0000255" key="1">
    <source>
        <dbReference type="HAMAP-Rule" id="MF_01283"/>
    </source>
</evidence>
<feature type="chain" id="PRO_1000165259" description="Riboflavin biosynthesis protein RibBA">
    <location>
        <begin position="1"/>
        <end position="410"/>
    </location>
</feature>
<feature type="region of interest" description="DHBP synthase">
    <location>
        <begin position="1"/>
        <end position="205"/>
    </location>
</feature>
<feature type="region of interest" description="GTP cyclohydrolase II">
    <location>
        <begin position="206"/>
        <end position="410"/>
    </location>
</feature>
<feature type="active site" description="Proton acceptor; for GTP cyclohydrolase activity" evidence="1">
    <location>
        <position position="333"/>
    </location>
</feature>
<feature type="active site" description="Nucleophile; for GTP cyclohydrolase activity" evidence="1">
    <location>
        <position position="335"/>
    </location>
</feature>
<feature type="binding site" evidence="1">
    <location>
        <begin position="30"/>
        <end position="31"/>
    </location>
    <ligand>
        <name>D-ribulose 5-phosphate</name>
        <dbReference type="ChEBI" id="CHEBI:58121"/>
    </ligand>
</feature>
<feature type="binding site" evidence="1">
    <location>
        <position position="31"/>
    </location>
    <ligand>
        <name>Mg(2+)</name>
        <dbReference type="ChEBI" id="CHEBI:18420"/>
        <label>1</label>
    </ligand>
</feature>
<feature type="binding site" evidence="1">
    <location>
        <position position="31"/>
    </location>
    <ligand>
        <name>Mg(2+)</name>
        <dbReference type="ChEBI" id="CHEBI:18420"/>
        <label>2</label>
    </ligand>
</feature>
<feature type="binding site" evidence="1">
    <location>
        <position position="35"/>
    </location>
    <ligand>
        <name>D-ribulose 5-phosphate</name>
        <dbReference type="ChEBI" id="CHEBI:58121"/>
    </ligand>
</feature>
<feature type="binding site" evidence="1">
    <location>
        <begin position="144"/>
        <end position="148"/>
    </location>
    <ligand>
        <name>D-ribulose 5-phosphate</name>
        <dbReference type="ChEBI" id="CHEBI:58121"/>
    </ligand>
</feature>
<feature type="binding site" evidence="1">
    <location>
        <position position="147"/>
    </location>
    <ligand>
        <name>Mg(2+)</name>
        <dbReference type="ChEBI" id="CHEBI:18420"/>
        <label>2</label>
    </ligand>
</feature>
<feature type="binding site" evidence="1">
    <location>
        <position position="168"/>
    </location>
    <ligand>
        <name>D-ribulose 5-phosphate</name>
        <dbReference type="ChEBI" id="CHEBI:58121"/>
    </ligand>
</feature>
<feature type="binding site" evidence="1">
    <location>
        <begin position="256"/>
        <end position="260"/>
    </location>
    <ligand>
        <name>GTP</name>
        <dbReference type="ChEBI" id="CHEBI:37565"/>
    </ligand>
</feature>
<feature type="binding site" evidence="1">
    <location>
        <position position="261"/>
    </location>
    <ligand>
        <name>Zn(2+)</name>
        <dbReference type="ChEBI" id="CHEBI:29105"/>
        <note>catalytic</note>
    </ligand>
</feature>
<feature type="binding site" evidence="1">
    <location>
        <position position="272"/>
    </location>
    <ligand>
        <name>Zn(2+)</name>
        <dbReference type="ChEBI" id="CHEBI:29105"/>
        <note>catalytic</note>
    </ligand>
</feature>
<feature type="binding site" evidence="1">
    <location>
        <position position="274"/>
    </location>
    <ligand>
        <name>Zn(2+)</name>
        <dbReference type="ChEBI" id="CHEBI:29105"/>
        <note>catalytic</note>
    </ligand>
</feature>
<feature type="binding site" evidence="1">
    <location>
        <position position="277"/>
    </location>
    <ligand>
        <name>GTP</name>
        <dbReference type="ChEBI" id="CHEBI:37565"/>
    </ligand>
</feature>
<feature type="binding site" evidence="1">
    <location>
        <begin position="299"/>
        <end position="301"/>
    </location>
    <ligand>
        <name>GTP</name>
        <dbReference type="ChEBI" id="CHEBI:37565"/>
    </ligand>
</feature>
<feature type="binding site" evidence="1">
    <location>
        <position position="321"/>
    </location>
    <ligand>
        <name>GTP</name>
        <dbReference type="ChEBI" id="CHEBI:37565"/>
    </ligand>
</feature>
<feature type="binding site" evidence="1">
    <location>
        <position position="356"/>
    </location>
    <ligand>
        <name>GTP</name>
        <dbReference type="ChEBI" id="CHEBI:37565"/>
    </ligand>
</feature>
<feature type="binding site" evidence="1">
    <location>
        <position position="361"/>
    </location>
    <ligand>
        <name>GTP</name>
        <dbReference type="ChEBI" id="CHEBI:37565"/>
    </ligand>
</feature>
<feature type="site" description="Essential for DHBP synthase activity" evidence="1">
    <location>
        <position position="130"/>
    </location>
</feature>
<feature type="site" description="Essential for DHBP synthase activity" evidence="1">
    <location>
        <position position="168"/>
    </location>
</feature>
<organism>
    <name type="scientific">Chlorobium phaeovibrioides (strain DSM 265 / 1930)</name>
    <name type="common">Prosthecochloris vibrioformis (strain DSM 265)</name>
    <dbReference type="NCBI Taxonomy" id="290318"/>
    <lineage>
        <taxon>Bacteria</taxon>
        <taxon>Pseudomonadati</taxon>
        <taxon>Chlorobiota</taxon>
        <taxon>Chlorobiia</taxon>
        <taxon>Chlorobiales</taxon>
        <taxon>Chlorobiaceae</taxon>
        <taxon>Chlorobium/Pelodictyon group</taxon>
        <taxon>Chlorobium</taxon>
    </lineage>
</organism>
<sequence>MENKRIDTIESALEDIGQGKLVIVIDDEERENEGDFIAAADKVTTEMINFITKEARGLLCVAVTMDRAKELQLEPMVQRNTSQHETNFTVSVDAIAEGVTTGISVYDRAMTIKMLGDETSHADSFSRPGHIFPLRAMDGGVLRRVGHTEAAVDLARLAGCSPVGLLCEILHEDGSMARLADLMTIKEKFGLKLITIKDLVAFQMRRSKLVQRAVESNIPTAYGEFRLMAYESFTDQQNHMAFVKGDVSTDEPVLVRVHSQCATGDTFASLRCDCGNQLASALRMIEKEGRGVLVYLMQEGRGIGLINKLKAYNLQDDGFDTVEANEELGFKADLRDYGIGAQILQDLGVRKMRLMTNNPKKVVGLEGYGLEIVERVPLEIEPNAVNKTYLETKRDKMGHMISCSCGSGNH</sequence>
<comment type="function">
    <text evidence="1">Catalyzes the conversion of D-ribulose 5-phosphate to formate and 3,4-dihydroxy-2-butanone 4-phosphate.</text>
</comment>
<comment type="function">
    <text evidence="1">Catalyzes the conversion of GTP to 2,5-diamino-6-ribosylamino-4(3H)-pyrimidinone 5'-phosphate (DARP), formate and pyrophosphate.</text>
</comment>
<comment type="catalytic activity">
    <reaction evidence="1">
        <text>D-ribulose 5-phosphate = (2S)-2-hydroxy-3-oxobutyl phosphate + formate + H(+)</text>
        <dbReference type="Rhea" id="RHEA:18457"/>
        <dbReference type="ChEBI" id="CHEBI:15378"/>
        <dbReference type="ChEBI" id="CHEBI:15740"/>
        <dbReference type="ChEBI" id="CHEBI:58121"/>
        <dbReference type="ChEBI" id="CHEBI:58830"/>
        <dbReference type="EC" id="4.1.99.12"/>
    </reaction>
</comment>
<comment type="catalytic activity">
    <reaction evidence="1">
        <text>GTP + 4 H2O = 2,5-diamino-6-hydroxy-4-(5-phosphoribosylamino)-pyrimidine + formate + 2 phosphate + 3 H(+)</text>
        <dbReference type="Rhea" id="RHEA:23704"/>
        <dbReference type="ChEBI" id="CHEBI:15377"/>
        <dbReference type="ChEBI" id="CHEBI:15378"/>
        <dbReference type="ChEBI" id="CHEBI:15740"/>
        <dbReference type="ChEBI" id="CHEBI:37565"/>
        <dbReference type="ChEBI" id="CHEBI:43474"/>
        <dbReference type="ChEBI" id="CHEBI:58614"/>
        <dbReference type="EC" id="3.5.4.25"/>
    </reaction>
</comment>
<comment type="cofactor">
    <cofactor evidence="1">
        <name>Mg(2+)</name>
        <dbReference type="ChEBI" id="CHEBI:18420"/>
    </cofactor>
    <cofactor evidence="1">
        <name>Mn(2+)</name>
        <dbReference type="ChEBI" id="CHEBI:29035"/>
    </cofactor>
    <text evidence="1">Binds 2 divalent metal cations per subunit. Magnesium or manganese.</text>
</comment>
<comment type="cofactor">
    <cofactor evidence="1">
        <name>Zn(2+)</name>
        <dbReference type="ChEBI" id="CHEBI:29105"/>
    </cofactor>
    <text evidence="1">Binds 1 zinc ion per subunit.</text>
</comment>
<comment type="pathway">
    <text evidence="1">Cofactor biosynthesis; riboflavin biosynthesis; 2-hydroxy-3-oxobutyl phosphate from D-ribulose 5-phosphate: step 1/1.</text>
</comment>
<comment type="pathway">
    <text evidence="1">Cofactor biosynthesis; riboflavin biosynthesis; 5-amino-6-(D-ribitylamino)uracil from GTP: step 1/4.</text>
</comment>
<comment type="similarity">
    <text evidence="1">In the N-terminal section; belongs to the DHBP synthase family.</text>
</comment>
<comment type="similarity">
    <text evidence="1">In the C-terminal section; belongs to the GTP cyclohydrolase II family.</text>
</comment>
<proteinExistence type="inferred from homology"/>
<name>RIBBA_CHLPM</name>
<dbReference type="EC" id="4.1.99.12" evidence="1"/>
<dbReference type="EC" id="3.5.4.25" evidence="1"/>
<dbReference type="EMBL" id="CP000607">
    <property type="protein sequence ID" value="ABP37393.1"/>
    <property type="molecule type" value="Genomic_DNA"/>
</dbReference>
<dbReference type="SMR" id="A4SFY4"/>
<dbReference type="STRING" id="290318.Cvib_1382"/>
<dbReference type="KEGG" id="pvi:Cvib_1382"/>
<dbReference type="eggNOG" id="COG0108">
    <property type="taxonomic scope" value="Bacteria"/>
</dbReference>
<dbReference type="eggNOG" id="COG0807">
    <property type="taxonomic scope" value="Bacteria"/>
</dbReference>
<dbReference type="HOGENOM" id="CLU_020273_1_2_10"/>
<dbReference type="OrthoDB" id="9793111at2"/>
<dbReference type="UniPathway" id="UPA00275">
    <property type="reaction ID" value="UER00399"/>
</dbReference>
<dbReference type="UniPathway" id="UPA00275">
    <property type="reaction ID" value="UER00400"/>
</dbReference>
<dbReference type="GO" id="GO:0005829">
    <property type="term" value="C:cytosol"/>
    <property type="evidence" value="ECO:0007669"/>
    <property type="project" value="TreeGrafter"/>
</dbReference>
<dbReference type="GO" id="GO:0008686">
    <property type="term" value="F:3,4-dihydroxy-2-butanone-4-phosphate synthase activity"/>
    <property type="evidence" value="ECO:0007669"/>
    <property type="project" value="UniProtKB-UniRule"/>
</dbReference>
<dbReference type="GO" id="GO:0005525">
    <property type="term" value="F:GTP binding"/>
    <property type="evidence" value="ECO:0007669"/>
    <property type="project" value="UniProtKB-KW"/>
</dbReference>
<dbReference type="GO" id="GO:0003935">
    <property type="term" value="F:GTP cyclohydrolase II activity"/>
    <property type="evidence" value="ECO:0007669"/>
    <property type="project" value="UniProtKB-UniRule"/>
</dbReference>
<dbReference type="GO" id="GO:0000287">
    <property type="term" value="F:magnesium ion binding"/>
    <property type="evidence" value="ECO:0007669"/>
    <property type="project" value="UniProtKB-UniRule"/>
</dbReference>
<dbReference type="GO" id="GO:0030145">
    <property type="term" value="F:manganese ion binding"/>
    <property type="evidence" value="ECO:0007669"/>
    <property type="project" value="UniProtKB-UniRule"/>
</dbReference>
<dbReference type="GO" id="GO:0008270">
    <property type="term" value="F:zinc ion binding"/>
    <property type="evidence" value="ECO:0007669"/>
    <property type="project" value="UniProtKB-UniRule"/>
</dbReference>
<dbReference type="GO" id="GO:0009231">
    <property type="term" value="P:riboflavin biosynthetic process"/>
    <property type="evidence" value="ECO:0007669"/>
    <property type="project" value="UniProtKB-UniRule"/>
</dbReference>
<dbReference type="CDD" id="cd00641">
    <property type="entry name" value="GTP_cyclohydro2"/>
    <property type="match status" value="1"/>
</dbReference>
<dbReference type="FunFam" id="3.40.50.10990:FF:000001">
    <property type="entry name" value="Riboflavin biosynthesis protein RibBA"/>
    <property type="match status" value="1"/>
</dbReference>
<dbReference type="FunFam" id="3.90.870.10:FF:000001">
    <property type="entry name" value="Riboflavin biosynthesis protein RibBA"/>
    <property type="match status" value="1"/>
</dbReference>
<dbReference type="Gene3D" id="3.90.870.10">
    <property type="entry name" value="DHBP synthase"/>
    <property type="match status" value="1"/>
</dbReference>
<dbReference type="Gene3D" id="3.40.50.10990">
    <property type="entry name" value="GTP cyclohydrolase II"/>
    <property type="match status" value="1"/>
</dbReference>
<dbReference type="HAMAP" id="MF_00179">
    <property type="entry name" value="RibA"/>
    <property type="match status" value="1"/>
</dbReference>
<dbReference type="HAMAP" id="MF_00180">
    <property type="entry name" value="RibB"/>
    <property type="match status" value="1"/>
</dbReference>
<dbReference type="HAMAP" id="MF_01283">
    <property type="entry name" value="RibBA"/>
    <property type="match status" value="1"/>
</dbReference>
<dbReference type="InterPro" id="IPR017945">
    <property type="entry name" value="DHBP_synth_RibB-like_a/b_dom"/>
</dbReference>
<dbReference type="InterPro" id="IPR000422">
    <property type="entry name" value="DHBP_synthase_RibB"/>
</dbReference>
<dbReference type="InterPro" id="IPR032677">
    <property type="entry name" value="GTP_cyclohydro_II"/>
</dbReference>
<dbReference type="InterPro" id="IPR000926">
    <property type="entry name" value="RibA"/>
</dbReference>
<dbReference type="InterPro" id="IPR036144">
    <property type="entry name" value="RibA-like_sf"/>
</dbReference>
<dbReference type="InterPro" id="IPR016299">
    <property type="entry name" value="Riboflavin_synth_RibBA"/>
</dbReference>
<dbReference type="NCBIfam" id="NF001591">
    <property type="entry name" value="PRK00393.1"/>
    <property type="match status" value="1"/>
</dbReference>
<dbReference type="NCBIfam" id="NF006803">
    <property type="entry name" value="PRK09311.1"/>
    <property type="match status" value="1"/>
</dbReference>
<dbReference type="NCBIfam" id="TIGR00505">
    <property type="entry name" value="ribA"/>
    <property type="match status" value="1"/>
</dbReference>
<dbReference type="NCBIfam" id="TIGR00506">
    <property type="entry name" value="ribB"/>
    <property type="match status" value="1"/>
</dbReference>
<dbReference type="PANTHER" id="PTHR21327:SF18">
    <property type="entry name" value="3,4-DIHYDROXY-2-BUTANONE 4-PHOSPHATE SYNTHASE"/>
    <property type="match status" value="1"/>
</dbReference>
<dbReference type="PANTHER" id="PTHR21327">
    <property type="entry name" value="GTP CYCLOHYDROLASE II-RELATED"/>
    <property type="match status" value="1"/>
</dbReference>
<dbReference type="Pfam" id="PF00926">
    <property type="entry name" value="DHBP_synthase"/>
    <property type="match status" value="1"/>
</dbReference>
<dbReference type="Pfam" id="PF00925">
    <property type="entry name" value="GTP_cyclohydro2"/>
    <property type="match status" value="1"/>
</dbReference>
<dbReference type="PIRSF" id="PIRSF001259">
    <property type="entry name" value="RibA"/>
    <property type="match status" value="1"/>
</dbReference>
<dbReference type="SUPFAM" id="SSF142695">
    <property type="entry name" value="RibA-like"/>
    <property type="match status" value="1"/>
</dbReference>
<dbReference type="SUPFAM" id="SSF55821">
    <property type="entry name" value="YrdC/RibB"/>
    <property type="match status" value="1"/>
</dbReference>
<reference key="1">
    <citation type="submission" date="2007-03" db="EMBL/GenBank/DDBJ databases">
        <title>Complete sequence of Prosthecochloris vibrioformis DSM 265.</title>
        <authorList>
            <consortium name="US DOE Joint Genome Institute"/>
            <person name="Copeland A."/>
            <person name="Lucas S."/>
            <person name="Lapidus A."/>
            <person name="Barry K."/>
            <person name="Detter J.C."/>
            <person name="Glavina del Rio T."/>
            <person name="Hammon N."/>
            <person name="Israni S."/>
            <person name="Pitluck S."/>
            <person name="Schmutz J."/>
            <person name="Larimer F."/>
            <person name="Land M."/>
            <person name="Hauser L."/>
            <person name="Mikhailova N."/>
            <person name="Li T."/>
            <person name="Overmann J."/>
            <person name="Schuster S.C."/>
            <person name="Bryant D.A."/>
            <person name="Richardson P."/>
        </authorList>
    </citation>
    <scope>NUCLEOTIDE SEQUENCE [LARGE SCALE GENOMIC DNA]</scope>
    <source>
        <strain>DSM 265 / 1930</strain>
    </source>
</reference>
<protein>
    <recommendedName>
        <fullName evidence="1">Riboflavin biosynthesis protein RibBA</fullName>
    </recommendedName>
    <domain>
        <recommendedName>
            <fullName evidence="1">3,4-dihydroxy-2-butanone 4-phosphate synthase</fullName>
            <shortName evidence="1">DHBP synthase</shortName>
            <ecNumber evidence="1">4.1.99.12</ecNumber>
        </recommendedName>
    </domain>
    <domain>
        <recommendedName>
            <fullName evidence="1">GTP cyclohydrolase-2</fullName>
            <ecNumber evidence="1">3.5.4.25</ecNumber>
        </recommendedName>
        <alternativeName>
            <fullName evidence="1">GTP cyclohydrolase II</fullName>
        </alternativeName>
    </domain>
</protein>
<accession>A4SFY4</accession>
<keyword id="KW-0342">GTP-binding</keyword>
<keyword id="KW-0378">Hydrolase</keyword>
<keyword id="KW-0456">Lyase</keyword>
<keyword id="KW-0460">Magnesium</keyword>
<keyword id="KW-0464">Manganese</keyword>
<keyword id="KW-0479">Metal-binding</keyword>
<keyword id="KW-0511">Multifunctional enzyme</keyword>
<keyword id="KW-0547">Nucleotide-binding</keyword>
<keyword id="KW-0686">Riboflavin biosynthesis</keyword>
<keyword id="KW-0862">Zinc</keyword>
<gene>
    <name evidence="1" type="primary">ribBA</name>
    <name type="ordered locus">Cvib_1382</name>
</gene>